<dbReference type="EC" id="1.7.-.-" evidence="1"/>
<dbReference type="EC" id="1.11.1.-" evidence="1"/>
<dbReference type="EMBL" id="AF291838">
    <property type="protein sequence ID" value="AAG02112.1"/>
    <property type="molecule type" value="mRNA"/>
</dbReference>
<dbReference type="PIR" id="A02526">
    <property type="entry name" value="MYTUY"/>
</dbReference>
<dbReference type="RefSeq" id="XP_044201903.1">
    <property type="nucleotide sequence ID" value="XM_044345968.1"/>
</dbReference>
<dbReference type="RefSeq" id="XP_044201904.1">
    <property type="nucleotide sequence ID" value="XM_044345969.1"/>
</dbReference>
<dbReference type="PDB" id="1MYT">
    <property type="method" value="X-ray"/>
    <property type="resolution" value="1.74 A"/>
    <property type="chains" value="A=2-147"/>
</dbReference>
<dbReference type="PDBsum" id="1MYT"/>
<dbReference type="SMR" id="P02205"/>
<dbReference type="iPTMnet" id="P02205"/>
<dbReference type="GeneID" id="122978898"/>
<dbReference type="OrthoDB" id="6344802at2759"/>
<dbReference type="EvolutionaryTrace" id="P02205"/>
<dbReference type="GO" id="GO:0070062">
    <property type="term" value="C:extracellular exosome"/>
    <property type="evidence" value="ECO:0007669"/>
    <property type="project" value="TreeGrafter"/>
</dbReference>
<dbReference type="GO" id="GO:0016528">
    <property type="term" value="C:sarcoplasm"/>
    <property type="evidence" value="ECO:0000250"/>
    <property type="project" value="UniProtKB"/>
</dbReference>
<dbReference type="GO" id="GO:0020037">
    <property type="term" value="F:heme binding"/>
    <property type="evidence" value="ECO:0007669"/>
    <property type="project" value="InterPro"/>
</dbReference>
<dbReference type="GO" id="GO:0046872">
    <property type="term" value="F:metal ion binding"/>
    <property type="evidence" value="ECO:0007669"/>
    <property type="project" value="UniProtKB-KW"/>
</dbReference>
<dbReference type="GO" id="GO:0098809">
    <property type="term" value="F:nitrite reductase activity"/>
    <property type="evidence" value="ECO:0000250"/>
    <property type="project" value="UniProtKB"/>
</dbReference>
<dbReference type="GO" id="GO:0019825">
    <property type="term" value="F:oxygen binding"/>
    <property type="evidence" value="ECO:0007669"/>
    <property type="project" value="InterPro"/>
</dbReference>
<dbReference type="GO" id="GO:0005344">
    <property type="term" value="F:oxygen carrier activity"/>
    <property type="evidence" value="ECO:0000250"/>
    <property type="project" value="UniProtKB"/>
</dbReference>
<dbReference type="GO" id="GO:0004601">
    <property type="term" value="F:peroxidase activity"/>
    <property type="evidence" value="ECO:0000250"/>
    <property type="project" value="UniProtKB"/>
</dbReference>
<dbReference type="GO" id="GO:0019430">
    <property type="term" value="P:removal of superoxide radicals"/>
    <property type="evidence" value="ECO:0000250"/>
    <property type="project" value="UniProtKB"/>
</dbReference>
<dbReference type="Gene3D" id="6.10.140.2100">
    <property type="match status" value="1"/>
</dbReference>
<dbReference type="Gene3D" id="6.10.140.2110">
    <property type="match status" value="1"/>
</dbReference>
<dbReference type="InterPro" id="IPR000971">
    <property type="entry name" value="Globin"/>
</dbReference>
<dbReference type="InterPro" id="IPR009050">
    <property type="entry name" value="Globin-like_sf"/>
</dbReference>
<dbReference type="InterPro" id="IPR002335">
    <property type="entry name" value="Myoglobin"/>
</dbReference>
<dbReference type="PANTHER" id="PTHR47132">
    <property type="entry name" value="MYOGLOBIN"/>
    <property type="match status" value="1"/>
</dbReference>
<dbReference type="PANTHER" id="PTHR47132:SF1">
    <property type="entry name" value="MYOGLOBIN"/>
    <property type="match status" value="1"/>
</dbReference>
<dbReference type="Pfam" id="PF00042">
    <property type="entry name" value="Globin"/>
    <property type="match status" value="1"/>
</dbReference>
<dbReference type="PRINTS" id="PR00613">
    <property type="entry name" value="MYOGLOBIN"/>
</dbReference>
<dbReference type="SUPFAM" id="SSF46458">
    <property type="entry name" value="Globin-like"/>
    <property type="match status" value="1"/>
</dbReference>
<dbReference type="PROSITE" id="PS01033">
    <property type="entry name" value="GLOBIN"/>
    <property type="match status" value="1"/>
</dbReference>
<organism>
    <name type="scientific">Thunnus albacares</name>
    <name type="common">Yellowfin tuna</name>
    <name type="synonym">Neothunnus macropterus</name>
    <dbReference type="NCBI Taxonomy" id="8236"/>
    <lineage>
        <taxon>Eukaryota</taxon>
        <taxon>Metazoa</taxon>
        <taxon>Chordata</taxon>
        <taxon>Craniata</taxon>
        <taxon>Vertebrata</taxon>
        <taxon>Euteleostomi</taxon>
        <taxon>Actinopterygii</taxon>
        <taxon>Neopterygii</taxon>
        <taxon>Teleostei</taxon>
        <taxon>Neoteleostei</taxon>
        <taxon>Acanthomorphata</taxon>
        <taxon>Pelagiaria</taxon>
        <taxon>Scombriformes</taxon>
        <taxon>Scombridae</taxon>
        <taxon>Thunnus</taxon>
    </lineage>
</organism>
<evidence type="ECO:0000250" key="1">
    <source>
        <dbReference type="UniProtKB" id="P02144"/>
    </source>
</evidence>
<evidence type="ECO:0000250" key="2">
    <source>
        <dbReference type="UniProtKB" id="P02185"/>
    </source>
</evidence>
<evidence type="ECO:0000250" key="3">
    <source>
        <dbReference type="UniProtKB" id="P02189"/>
    </source>
</evidence>
<evidence type="ECO:0000250" key="4">
    <source>
        <dbReference type="UniProtKB" id="P68082"/>
    </source>
</evidence>
<evidence type="ECO:0000255" key="5">
    <source>
        <dbReference type="PROSITE-ProRule" id="PRU00238"/>
    </source>
</evidence>
<evidence type="ECO:0000269" key="6">
    <source>
    </source>
</evidence>
<evidence type="ECO:0007829" key="7">
    <source>
        <dbReference type="PDB" id="1MYT"/>
    </source>
</evidence>
<reference key="1">
    <citation type="journal article" date="2001" name="Am. J. Physiol.">
        <title>Oxygen affinity and amino acid sequence of myoglobins from endothermic and ectothermic fish.</title>
        <authorList>
            <person name="Marcinek D.J."/>
            <person name="Bonaventura J."/>
            <person name="Wittenberg J.B."/>
            <person name="Block B.A."/>
        </authorList>
    </citation>
    <scope>NUCLEOTIDE SEQUENCE [MRNA]</scope>
    <source>
        <tissue>Skeletal muscle</tissue>
    </source>
</reference>
<reference key="2">
    <citation type="journal article" date="1980" name="J. Biol. Chem.">
        <title>The primary structure of myoglobin from yellowfin tuna (Thunnus albacares).</title>
        <authorList>
            <person name="Watts D.A."/>
            <person name="Rice R.H."/>
            <person name="Brown W.D."/>
        </authorList>
    </citation>
    <scope>PROTEIN SEQUENCE OF 2-147</scope>
    <scope>ACETYLATION AT ALA-2</scope>
</reference>
<reference key="3">
    <citation type="journal article" date="1994" name="Acta Crystallogr. D">
        <title>1.70-A resolution structure of myoglobin from yellowfin tuna. An example of a myoglobin lacking the D helix.</title>
        <authorList>
            <person name="Birnbaum G.I."/>
            <person name="Evans S.V."/>
            <person name="Przybylska M."/>
            <person name="Rose D.R."/>
        </authorList>
    </citation>
    <scope>X-RAY CRYSTALLOGRAPHY (1.74 ANGSTROMS)</scope>
</reference>
<gene>
    <name type="primary">mb</name>
</gene>
<protein>
    <recommendedName>
        <fullName>Myoglobin</fullName>
    </recommendedName>
    <alternativeName>
        <fullName evidence="1">Nitrite reductase MB</fullName>
        <ecNumber evidence="1">1.7.-.-</ecNumber>
    </alternativeName>
    <alternativeName>
        <fullName evidence="1">Pseudoperoxidase MB</fullName>
        <ecNumber evidence="1">1.11.1.-</ecNumber>
    </alternativeName>
</protein>
<feature type="initiator methionine" description="Removed" evidence="6">
    <location>
        <position position="1"/>
    </location>
</feature>
<feature type="chain" id="PRO_0000053375" description="Myoglobin">
    <location>
        <begin position="2"/>
        <end position="147"/>
    </location>
</feature>
<feature type="domain" description="Globin" evidence="5">
    <location>
        <begin position="2"/>
        <end position="141"/>
    </location>
</feature>
<feature type="binding site" evidence="4">
    <location>
        <position position="60"/>
    </location>
    <ligand>
        <name>nitrite</name>
        <dbReference type="ChEBI" id="CHEBI:16301"/>
    </ligand>
</feature>
<feature type="binding site" evidence="3 5">
    <location>
        <position position="60"/>
    </location>
    <ligand>
        <name>O2</name>
        <dbReference type="ChEBI" id="CHEBI:15379"/>
    </ligand>
</feature>
<feature type="binding site" description="proximal binding residue" evidence="1">
    <location>
        <position position="89"/>
    </location>
    <ligand>
        <name>heme b</name>
        <dbReference type="ChEBI" id="CHEBI:60344"/>
    </ligand>
    <ligandPart>
        <name>Fe</name>
        <dbReference type="ChEBI" id="CHEBI:18248"/>
    </ligandPart>
</feature>
<feature type="modified residue" description="N-acetylalanine" evidence="6">
    <location>
        <position position="2"/>
    </location>
</feature>
<feature type="helix" evidence="7">
    <location>
        <begin position="3"/>
        <end position="9"/>
    </location>
</feature>
<feature type="helix" evidence="7">
    <location>
        <begin position="12"/>
        <end position="15"/>
    </location>
</feature>
<feature type="helix" evidence="7">
    <location>
        <begin position="18"/>
        <end position="32"/>
    </location>
</feature>
<feature type="helix" evidence="7">
    <location>
        <begin position="34"/>
        <end position="39"/>
    </location>
</feature>
<feature type="turn" evidence="7">
    <location>
        <begin position="41"/>
        <end position="45"/>
    </location>
</feature>
<feature type="helix" evidence="7">
    <location>
        <begin position="48"/>
        <end position="50"/>
    </location>
</feature>
<feature type="helix" evidence="7">
    <location>
        <begin position="55"/>
        <end position="73"/>
    </location>
</feature>
<feature type="turn" evidence="7">
    <location>
        <begin position="74"/>
        <end position="76"/>
    </location>
</feature>
<feature type="helix" evidence="7">
    <location>
        <begin position="79"/>
        <end position="91"/>
    </location>
</feature>
<feature type="helix" evidence="7">
    <location>
        <begin position="98"/>
        <end position="114"/>
    </location>
</feature>
<feature type="helix" evidence="7">
    <location>
        <begin position="119"/>
        <end position="143"/>
    </location>
</feature>
<name>MYG_THUAL</name>
<sequence>MADFDAVLKCWGPVEADYTTMGGLVLTRLFKEHPETQKLFPKFAGIAQADIAGNAAISAHGATVLKKLGELLKAKGSHAAILKPLANSHATKHKIPINNFKLISEVLVKVMHEKAGLDAGGQTALRNVMGIIIADLEANYKELGFSG</sequence>
<accession>P02205</accession>
<accession>Q9DGI7</accession>
<keyword id="KW-0002">3D-structure</keyword>
<keyword id="KW-0007">Acetylation</keyword>
<keyword id="KW-0963">Cytoplasm</keyword>
<keyword id="KW-0903">Direct protein sequencing</keyword>
<keyword id="KW-0349">Heme</keyword>
<keyword id="KW-0408">Iron</keyword>
<keyword id="KW-0479">Metal-binding</keyword>
<keyword id="KW-0514">Muscle protein</keyword>
<keyword id="KW-0560">Oxidoreductase</keyword>
<keyword id="KW-0561">Oxygen transport</keyword>
<keyword id="KW-0813">Transport</keyword>
<proteinExistence type="evidence at protein level"/>
<comment type="function">
    <text evidence="1">Monomeric heme protein which primary function is to store oxygen and facilitate its diffusion within muscle tissues. Reversibly binds oxygen through a pentacoordinated heme iron and enables its timely and efficient release as needed during periods of heightened demand. Depending on the oxidative conditions of tissues and cells, and in addition to its ability to bind oxygen, it also has a nitrite reductase activity whereby it regulates the production of bioactive nitric oxide. Under stress conditions, like hypoxia and anoxia, it also protects cells against reactive oxygen species thanks to its pseudoperoxidase activity.</text>
</comment>
<comment type="catalytic activity">
    <reaction evidence="1">
        <text>Fe(III)-heme b-[protein] + nitric oxide + H2O = Fe(II)-heme b-[protein] + nitrite + 2 H(+)</text>
        <dbReference type="Rhea" id="RHEA:77711"/>
        <dbReference type="Rhea" id="RHEA-COMP:18975"/>
        <dbReference type="Rhea" id="RHEA-COMP:18976"/>
        <dbReference type="ChEBI" id="CHEBI:15377"/>
        <dbReference type="ChEBI" id="CHEBI:15378"/>
        <dbReference type="ChEBI" id="CHEBI:16301"/>
        <dbReference type="ChEBI" id="CHEBI:16480"/>
        <dbReference type="ChEBI" id="CHEBI:55376"/>
        <dbReference type="ChEBI" id="CHEBI:60344"/>
    </reaction>
    <physiologicalReaction direction="right-to-left" evidence="1">
        <dbReference type="Rhea" id="RHEA:77713"/>
    </physiologicalReaction>
</comment>
<comment type="catalytic activity">
    <reaction evidence="1">
        <text>H2O2 + AH2 = A + 2 H2O</text>
        <dbReference type="Rhea" id="RHEA:30275"/>
        <dbReference type="ChEBI" id="CHEBI:13193"/>
        <dbReference type="ChEBI" id="CHEBI:15377"/>
        <dbReference type="ChEBI" id="CHEBI:16240"/>
        <dbReference type="ChEBI" id="CHEBI:17499"/>
    </reaction>
</comment>
<comment type="subunit">
    <text evidence="2">Monomeric.</text>
</comment>
<comment type="subcellular location">
    <subcellularLocation>
        <location evidence="1">Cytoplasm</location>
        <location evidence="1">Sarcoplasm</location>
    </subcellularLocation>
</comment>
<comment type="similarity">
    <text evidence="5">Belongs to the globin family.</text>
</comment>